<evidence type="ECO:0000255" key="1">
    <source>
        <dbReference type="HAMAP-Rule" id="MF_00537"/>
    </source>
</evidence>
<evidence type="ECO:0000305" key="2"/>
<accession>Q62GL8</accession>
<keyword id="KW-1185">Reference proteome</keyword>
<keyword id="KW-0687">Ribonucleoprotein</keyword>
<keyword id="KW-0689">Ribosomal protein</keyword>
<keyword id="KW-0694">RNA-binding</keyword>
<keyword id="KW-0699">rRNA-binding</keyword>
<name>RS14_BURMA</name>
<reference key="1">
    <citation type="journal article" date="2004" name="Proc. Natl. Acad. Sci. U.S.A.">
        <title>Structural flexibility in the Burkholderia mallei genome.</title>
        <authorList>
            <person name="Nierman W.C."/>
            <person name="DeShazer D."/>
            <person name="Kim H.S."/>
            <person name="Tettelin H."/>
            <person name="Nelson K.E."/>
            <person name="Feldblyum T.V."/>
            <person name="Ulrich R.L."/>
            <person name="Ronning C.M."/>
            <person name="Brinkac L.M."/>
            <person name="Daugherty S.C."/>
            <person name="Davidsen T.D."/>
            <person name="DeBoy R.T."/>
            <person name="Dimitrov G."/>
            <person name="Dodson R.J."/>
            <person name="Durkin A.S."/>
            <person name="Gwinn M.L."/>
            <person name="Haft D.H."/>
            <person name="Khouri H.M."/>
            <person name="Kolonay J.F."/>
            <person name="Madupu R."/>
            <person name="Mohammoud Y."/>
            <person name="Nelson W.C."/>
            <person name="Radune D."/>
            <person name="Romero C.M."/>
            <person name="Sarria S."/>
            <person name="Selengut J."/>
            <person name="Shamblin C."/>
            <person name="Sullivan S.A."/>
            <person name="White O."/>
            <person name="Yu Y."/>
            <person name="Zafar N."/>
            <person name="Zhou L."/>
            <person name="Fraser C.M."/>
        </authorList>
    </citation>
    <scope>NUCLEOTIDE SEQUENCE [LARGE SCALE GENOMIC DNA]</scope>
    <source>
        <strain>ATCC 23344</strain>
    </source>
</reference>
<proteinExistence type="inferred from homology"/>
<protein>
    <recommendedName>
        <fullName evidence="1">Small ribosomal subunit protein uS14</fullName>
    </recommendedName>
    <alternativeName>
        <fullName evidence="2">30S ribosomal protein S14</fullName>
    </alternativeName>
</protein>
<organism>
    <name type="scientific">Burkholderia mallei (strain ATCC 23344)</name>
    <dbReference type="NCBI Taxonomy" id="243160"/>
    <lineage>
        <taxon>Bacteria</taxon>
        <taxon>Pseudomonadati</taxon>
        <taxon>Pseudomonadota</taxon>
        <taxon>Betaproteobacteria</taxon>
        <taxon>Burkholderiales</taxon>
        <taxon>Burkholderiaceae</taxon>
        <taxon>Burkholderia</taxon>
        <taxon>pseudomallei group</taxon>
    </lineage>
</organism>
<sequence>MAKLALIEREKKRARLAQKYAPKRAELKAIIDDASKSDEERYAARLELQQLPRNANPTRKRNRCAITGRPRGTFRKFGLARNKIREIAFRGEIPGLTKASW</sequence>
<comment type="function">
    <text evidence="1">Binds 16S rRNA, required for the assembly of 30S particles and may also be responsible for determining the conformation of the 16S rRNA at the A site.</text>
</comment>
<comment type="subunit">
    <text evidence="1">Part of the 30S ribosomal subunit. Contacts proteins S3 and S10.</text>
</comment>
<comment type="similarity">
    <text evidence="1">Belongs to the universal ribosomal protein uS14 family.</text>
</comment>
<gene>
    <name evidence="1" type="primary">rpsN</name>
    <name type="ordered locus">BMA2619</name>
</gene>
<feature type="chain" id="PRO_1000128335" description="Small ribosomal subunit protein uS14">
    <location>
        <begin position="1"/>
        <end position="101"/>
    </location>
</feature>
<dbReference type="EMBL" id="CP000010">
    <property type="protein sequence ID" value="AAU47857.1"/>
    <property type="molecule type" value="Genomic_DNA"/>
</dbReference>
<dbReference type="RefSeq" id="WP_004197948.1">
    <property type="nucleotide sequence ID" value="NC_006348.1"/>
</dbReference>
<dbReference type="RefSeq" id="YP_104153.1">
    <property type="nucleotide sequence ID" value="NC_006348.1"/>
</dbReference>
<dbReference type="SMR" id="Q62GL8"/>
<dbReference type="GeneID" id="93061819"/>
<dbReference type="KEGG" id="bma:BMA2619"/>
<dbReference type="PATRIC" id="fig|243160.12.peg.2690"/>
<dbReference type="eggNOG" id="COG0199">
    <property type="taxonomic scope" value="Bacteria"/>
</dbReference>
<dbReference type="HOGENOM" id="CLU_139869_0_1_4"/>
<dbReference type="Proteomes" id="UP000006693">
    <property type="component" value="Chromosome 1"/>
</dbReference>
<dbReference type="GO" id="GO:0005737">
    <property type="term" value="C:cytoplasm"/>
    <property type="evidence" value="ECO:0007669"/>
    <property type="project" value="UniProtKB-ARBA"/>
</dbReference>
<dbReference type="GO" id="GO:0015935">
    <property type="term" value="C:small ribosomal subunit"/>
    <property type="evidence" value="ECO:0007669"/>
    <property type="project" value="TreeGrafter"/>
</dbReference>
<dbReference type="GO" id="GO:0019843">
    <property type="term" value="F:rRNA binding"/>
    <property type="evidence" value="ECO:0007669"/>
    <property type="project" value="UniProtKB-UniRule"/>
</dbReference>
<dbReference type="GO" id="GO:0003735">
    <property type="term" value="F:structural constituent of ribosome"/>
    <property type="evidence" value="ECO:0007669"/>
    <property type="project" value="InterPro"/>
</dbReference>
<dbReference type="GO" id="GO:0006412">
    <property type="term" value="P:translation"/>
    <property type="evidence" value="ECO:0007669"/>
    <property type="project" value="UniProtKB-UniRule"/>
</dbReference>
<dbReference type="FunFam" id="1.10.287.1480:FF:000001">
    <property type="entry name" value="30S ribosomal protein S14"/>
    <property type="match status" value="1"/>
</dbReference>
<dbReference type="Gene3D" id="1.10.287.1480">
    <property type="match status" value="1"/>
</dbReference>
<dbReference type="HAMAP" id="MF_00537">
    <property type="entry name" value="Ribosomal_uS14_1"/>
    <property type="match status" value="1"/>
</dbReference>
<dbReference type="InterPro" id="IPR001209">
    <property type="entry name" value="Ribosomal_uS14"/>
</dbReference>
<dbReference type="InterPro" id="IPR023036">
    <property type="entry name" value="Ribosomal_uS14_bac/plastid"/>
</dbReference>
<dbReference type="NCBIfam" id="NF006477">
    <property type="entry name" value="PRK08881.1"/>
    <property type="match status" value="1"/>
</dbReference>
<dbReference type="PANTHER" id="PTHR19836">
    <property type="entry name" value="30S RIBOSOMAL PROTEIN S14"/>
    <property type="match status" value="1"/>
</dbReference>
<dbReference type="PANTHER" id="PTHR19836:SF19">
    <property type="entry name" value="SMALL RIBOSOMAL SUBUNIT PROTEIN US14M"/>
    <property type="match status" value="1"/>
</dbReference>
<dbReference type="Pfam" id="PF00253">
    <property type="entry name" value="Ribosomal_S14"/>
    <property type="match status" value="1"/>
</dbReference>
<dbReference type="SUPFAM" id="SSF57716">
    <property type="entry name" value="Glucocorticoid receptor-like (DNA-binding domain)"/>
    <property type="match status" value="1"/>
</dbReference>